<accession>O01670</accession>
<reference key="1">
    <citation type="journal article" date="1997" name="J. Biol. Chem.">
        <title>Cloning and expression of a complementary DNA encoding a molluscan octopamine receptor that couples to chloride channels in HEK293 cells.</title>
        <authorList>
            <person name="Gerhardt C.C."/>
            <person name="Lodder H.C."/>
            <person name="Vincent M."/>
            <person name="Bakker R.A."/>
            <person name="Planta R.J."/>
            <person name="Vreugdenhil E."/>
            <person name="Kits K.S."/>
            <person name="van Heerikhuizen H."/>
        </authorList>
    </citation>
    <scope>NUCLEOTIDE SEQUENCE [MRNA]</scope>
    <scope>CHARACTERIZATION</scope>
    <source>
        <tissue>CNS</tissue>
    </source>
</reference>
<name>OAR2_LYMST</name>
<protein>
    <recommendedName>
        <fullName>Octopamine receptor 2</fullName>
        <shortName>OA2</shortName>
    </recommendedName>
</protein>
<sequence>MMSFPIALFADVNQSFRANLVVSSYHHAITFPTVRGANFSTFFPRNFSVSADVWLCGANFSQEWQLMQPVCSTKYDSITIFITVAVVLTLITLWTILGNFFVLMALYRYGTLRTMSNCLIGNLAISDLLLAVTVLPISTVHDLLGYWVFGEFTCTLWLCMDVLYCTASIWGLCTVAFDRYLATVYPVWYHDQRSVRKAVGCIVFVWIFSIVISFAPFIGWQHMIPSFFSFNASIQRYQCILFTSSSYVLYSSMGSFVIPAILMAFMYVRIFVVLHNQSRGVKFKSGLKISSSKYNGCPVINEPSREGINGLGRDVTNTTLLSDAVGSSADLTSNGKDDPRVLATAPIELTEDVPPLNGHHHRTVHETPYVSGLHTKRSNSFALPTELEKKCKPLTNNILHMMDFDRRNSHNAVIQRSASEMVNLDVSKHELLISNVCHRSKSATALTSETGDPLGSLAGPRRSLQCNVGGLVRNKHMTLSMKRRFELREQRATKRMLLIMACFCVCWMPFLFMYILRSVCDTCHMNQHFVAAIIWLGYVNSSLNPVLYTLFNDDFKVAFKRLIGARSPSAYRSPGPRR</sequence>
<comment type="function">
    <text>Receptor for octopamine. Octopamine (OA) is a neurotransmitter, neurohormone, and neuromodulator in invertebrates. This receptor induces a long lasting opening of voltage- independent chloride channels, a process which seems to involve protein phosphorylation but does not require either cAPK or PKC. The rank order of potency for agonists is p-synephrine &gt; p-octopamine &gt; xylometazoline &gt; B-HT920 &gt; norepinephrine = clonidine &gt; epinephrine &gt; p-tyramine &gt; phenylephrine = oxymetazoline = mehoxamine = dopamine &gt; serotonin &gt; histamine. For antagonists, the rank order is rauwolscine = mianserin &gt; phentolamine &gt; chlorpromazine &gt; spiperone &gt; yohimbine &gt; propanolol &gt; alprenolol &gt; prazosine &gt; pindolol.</text>
</comment>
<comment type="subcellular location">
    <subcellularLocation>
        <location>Cell membrane</location>
        <topology>Multi-pass membrane protein</topology>
    </subcellularLocation>
</comment>
<comment type="similarity">
    <text evidence="2">Belongs to the G-protein coupled receptor 1 family.</text>
</comment>
<feature type="chain" id="PRO_0000069957" description="Octopamine receptor 2">
    <location>
        <begin position="1"/>
        <end position="578"/>
    </location>
</feature>
<feature type="topological domain" description="Extracellular" evidence="1">
    <location>
        <begin position="1"/>
        <end position="84"/>
    </location>
</feature>
<feature type="transmembrane region" description="Helical; Name=1" evidence="1">
    <location>
        <begin position="85"/>
        <end position="107"/>
    </location>
</feature>
<feature type="topological domain" description="Cytoplasmic" evidence="1">
    <location>
        <begin position="108"/>
        <end position="117"/>
    </location>
</feature>
<feature type="transmembrane region" description="Helical; Name=2" evidence="1">
    <location>
        <begin position="118"/>
        <end position="139"/>
    </location>
</feature>
<feature type="topological domain" description="Extracellular" evidence="1">
    <location>
        <begin position="140"/>
        <end position="156"/>
    </location>
</feature>
<feature type="transmembrane region" description="Helical; Name=3" evidence="1">
    <location>
        <begin position="157"/>
        <end position="177"/>
    </location>
</feature>
<feature type="topological domain" description="Cytoplasmic" evidence="1">
    <location>
        <begin position="178"/>
        <end position="197"/>
    </location>
</feature>
<feature type="transmembrane region" description="Helical; Name=4" evidence="1">
    <location>
        <begin position="198"/>
        <end position="220"/>
    </location>
</feature>
<feature type="topological domain" description="Extracellular" evidence="1">
    <location>
        <begin position="221"/>
        <end position="251"/>
    </location>
</feature>
<feature type="transmembrane region" description="Helical; Name=5" evidence="1">
    <location>
        <begin position="252"/>
        <end position="272"/>
    </location>
</feature>
<feature type="topological domain" description="Cytoplasmic" evidence="1">
    <location>
        <begin position="273"/>
        <end position="495"/>
    </location>
</feature>
<feature type="transmembrane region" description="Helical; Name=6" evidence="1">
    <location>
        <begin position="496"/>
        <end position="517"/>
    </location>
</feature>
<feature type="topological domain" description="Extracellular" evidence="1">
    <location>
        <begin position="518"/>
        <end position="531"/>
    </location>
</feature>
<feature type="transmembrane region" description="Helical; Name=7" evidence="1">
    <location>
        <begin position="532"/>
        <end position="553"/>
    </location>
</feature>
<feature type="topological domain" description="Cytoplasmic" evidence="1">
    <location>
        <begin position="554"/>
        <end position="578"/>
    </location>
</feature>
<feature type="glycosylation site" description="N-linked (GlcNAc...) asparagine" evidence="1">
    <location>
        <position position="13"/>
    </location>
</feature>
<feature type="glycosylation site" description="N-linked (GlcNAc...) asparagine" evidence="1">
    <location>
        <position position="38"/>
    </location>
</feature>
<feature type="glycosylation site" description="N-linked (GlcNAc...) asparagine" evidence="1">
    <location>
        <position position="46"/>
    </location>
</feature>
<feature type="glycosylation site" description="N-linked (GlcNAc...) asparagine" evidence="1">
    <location>
        <position position="59"/>
    </location>
</feature>
<feature type="glycosylation site" description="N-linked (GlcNAc...) asparagine" evidence="1">
    <location>
        <position position="231"/>
    </location>
</feature>
<feature type="disulfide bond" evidence="2">
    <location>
        <begin position="154"/>
        <end position="239"/>
    </location>
</feature>
<dbReference type="EMBL" id="U62770">
    <property type="protein sequence ID" value="AAB53033.1"/>
    <property type="molecule type" value="mRNA"/>
</dbReference>
<dbReference type="SMR" id="O01670"/>
<dbReference type="GO" id="GO:0005886">
    <property type="term" value="C:plasma membrane"/>
    <property type="evidence" value="ECO:0007669"/>
    <property type="project" value="UniProtKB-SubCell"/>
</dbReference>
<dbReference type="GO" id="GO:0045202">
    <property type="term" value="C:synapse"/>
    <property type="evidence" value="ECO:0007669"/>
    <property type="project" value="GOC"/>
</dbReference>
<dbReference type="GO" id="GO:0001591">
    <property type="term" value="F:dopamine neurotransmitter receptor activity, coupled via Gi/Go"/>
    <property type="evidence" value="ECO:0007669"/>
    <property type="project" value="TreeGrafter"/>
</dbReference>
<dbReference type="GO" id="GO:0004930">
    <property type="term" value="F:G protein-coupled receptor activity"/>
    <property type="evidence" value="ECO:0007669"/>
    <property type="project" value="UniProtKB-KW"/>
</dbReference>
<dbReference type="CDD" id="cd14967">
    <property type="entry name" value="7tmA_amine_R-like"/>
    <property type="match status" value="1"/>
</dbReference>
<dbReference type="Gene3D" id="1.20.1070.10">
    <property type="entry name" value="Rhodopsin 7-helix transmembrane proteins"/>
    <property type="match status" value="2"/>
</dbReference>
<dbReference type="InterPro" id="IPR000276">
    <property type="entry name" value="GPCR_Rhodpsn"/>
</dbReference>
<dbReference type="InterPro" id="IPR017452">
    <property type="entry name" value="GPCR_Rhodpsn_7TM"/>
</dbReference>
<dbReference type="PANTHER" id="PTHR24248">
    <property type="entry name" value="ADRENERGIC RECEPTOR-RELATED G-PROTEIN COUPLED RECEPTOR"/>
    <property type="match status" value="1"/>
</dbReference>
<dbReference type="PANTHER" id="PTHR24248:SF125">
    <property type="entry name" value="DOPAMINE D2-LIKE RECEPTOR"/>
    <property type="match status" value="1"/>
</dbReference>
<dbReference type="Pfam" id="PF00001">
    <property type="entry name" value="7tm_1"/>
    <property type="match status" value="1"/>
</dbReference>
<dbReference type="PRINTS" id="PR00237">
    <property type="entry name" value="GPCRRHODOPSN"/>
</dbReference>
<dbReference type="SMART" id="SM01381">
    <property type="entry name" value="7TM_GPCR_Srsx"/>
    <property type="match status" value="1"/>
</dbReference>
<dbReference type="SUPFAM" id="SSF81321">
    <property type="entry name" value="Family A G protein-coupled receptor-like"/>
    <property type="match status" value="1"/>
</dbReference>
<dbReference type="PROSITE" id="PS50262">
    <property type="entry name" value="G_PROTEIN_RECEP_F1_2"/>
    <property type="match status" value="1"/>
</dbReference>
<keyword id="KW-1003">Cell membrane</keyword>
<keyword id="KW-1015">Disulfide bond</keyword>
<keyword id="KW-0297">G-protein coupled receptor</keyword>
<keyword id="KW-0325">Glycoprotein</keyword>
<keyword id="KW-0472">Membrane</keyword>
<keyword id="KW-0675">Receptor</keyword>
<keyword id="KW-0807">Transducer</keyword>
<keyword id="KW-0812">Transmembrane</keyword>
<keyword id="KW-1133">Transmembrane helix</keyword>
<organism>
    <name type="scientific">Lymnaea stagnalis</name>
    <name type="common">Great pond snail</name>
    <name type="synonym">Helix stagnalis</name>
    <dbReference type="NCBI Taxonomy" id="6523"/>
    <lineage>
        <taxon>Eukaryota</taxon>
        <taxon>Metazoa</taxon>
        <taxon>Spiralia</taxon>
        <taxon>Lophotrochozoa</taxon>
        <taxon>Mollusca</taxon>
        <taxon>Gastropoda</taxon>
        <taxon>Heterobranchia</taxon>
        <taxon>Euthyneura</taxon>
        <taxon>Panpulmonata</taxon>
        <taxon>Hygrophila</taxon>
        <taxon>Lymnaeoidea</taxon>
        <taxon>Lymnaeidae</taxon>
        <taxon>Lymnaea</taxon>
    </lineage>
</organism>
<proteinExistence type="evidence at protein level"/>
<evidence type="ECO:0000255" key="1"/>
<evidence type="ECO:0000255" key="2">
    <source>
        <dbReference type="PROSITE-ProRule" id="PRU00521"/>
    </source>
</evidence>